<organism>
    <name type="scientific">Methylobacillus flagellatus (strain ATCC 51484 / DSM 6875 / VKM B-1610 / KT)</name>
    <dbReference type="NCBI Taxonomy" id="265072"/>
    <lineage>
        <taxon>Bacteria</taxon>
        <taxon>Pseudomonadati</taxon>
        <taxon>Pseudomonadota</taxon>
        <taxon>Betaproteobacteria</taxon>
        <taxon>Nitrosomonadales</taxon>
        <taxon>Methylophilaceae</taxon>
        <taxon>Methylobacillus</taxon>
    </lineage>
</organism>
<comment type="catalytic activity">
    <reaction evidence="1">
        <text>D-arabinose 5-phosphate + phosphoenolpyruvate + H2O = 3-deoxy-alpha-D-manno-2-octulosonate-8-phosphate + phosphate</text>
        <dbReference type="Rhea" id="RHEA:14053"/>
        <dbReference type="ChEBI" id="CHEBI:15377"/>
        <dbReference type="ChEBI" id="CHEBI:43474"/>
        <dbReference type="ChEBI" id="CHEBI:57693"/>
        <dbReference type="ChEBI" id="CHEBI:58702"/>
        <dbReference type="ChEBI" id="CHEBI:85985"/>
        <dbReference type="EC" id="2.5.1.55"/>
    </reaction>
</comment>
<comment type="pathway">
    <text evidence="1">Carbohydrate biosynthesis; 3-deoxy-D-manno-octulosonate biosynthesis; 3-deoxy-D-manno-octulosonate from D-ribulose 5-phosphate: step 2/3.</text>
</comment>
<comment type="pathway">
    <text evidence="1">Bacterial outer membrane biogenesis; lipopolysaccharide biosynthesis.</text>
</comment>
<comment type="subcellular location">
    <subcellularLocation>
        <location evidence="1">Cytoplasm</location>
    </subcellularLocation>
</comment>
<comment type="similarity">
    <text evidence="1">Belongs to the KdsA family.</text>
</comment>
<protein>
    <recommendedName>
        <fullName evidence="1">2-dehydro-3-deoxyphosphooctonate aldolase</fullName>
        <ecNumber evidence="1">2.5.1.55</ecNumber>
    </recommendedName>
    <alternativeName>
        <fullName evidence="1">3-deoxy-D-manno-octulosonic acid 8-phosphate synthase</fullName>
    </alternativeName>
    <alternativeName>
        <fullName evidence="1">KDO-8-phosphate synthase</fullName>
        <shortName evidence="1">KDO 8-P synthase</shortName>
        <shortName evidence="1">KDOPS</shortName>
    </alternativeName>
    <alternativeName>
        <fullName evidence="1">Phospho-2-dehydro-3-deoxyoctonate aldolase</fullName>
    </alternativeName>
</protein>
<feature type="chain" id="PRO_0000304459" description="2-dehydro-3-deoxyphosphooctonate aldolase">
    <location>
        <begin position="1"/>
        <end position="279"/>
    </location>
</feature>
<accession>Q1H010</accession>
<dbReference type="EC" id="2.5.1.55" evidence="1"/>
<dbReference type="EMBL" id="CP000284">
    <property type="protein sequence ID" value="ABE50177.1"/>
    <property type="molecule type" value="Genomic_DNA"/>
</dbReference>
<dbReference type="RefSeq" id="WP_011480131.1">
    <property type="nucleotide sequence ID" value="NC_007947.1"/>
</dbReference>
<dbReference type="SMR" id="Q1H010"/>
<dbReference type="STRING" id="265072.Mfla_1910"/>
<dbReference type="KEGG" id="mfa:Mfla_1910"/>
<dbReference type="eggNOG" id="COG2877">
    <property type="taxonomic scope" value="Bacteria"/>
</dbReference>
<dbReference type="HOGENOM" id="CLU_036666_0_0_4"/>
<dbReference type="OrthoDB" id="9776934at2"/>
<dbReference type="UniPathway" id="UPA00030"/>
<dbReference type="UniPathway" id="UPA00357">
    <property type="reaction ID" value="UER00474"/>
</dbReference>
<dbReference type="Proteomes" id="UP000002440">
    <property type="component" value="Chromosome"/>
</dbReference>
<dbReference type="GO" id="GO:0005737">
    <property type="term" value="C:cytoplasm"/>
    <property type="evidence" value="ECO:0007669"/>
    <property type="project" value="UniProtKB-SubCell"/>
</dbReference>
<dbReference type="GO" id="GO:0008676">
    <property type="term" value="F:3-deoxy-8-phosphooctulonate synthase activity"/>
    <property type="evidence" value="ECO:0007669"/>
    <property type="project" value="UniProtKB-UniRule"/>
</dbReference>
<dbReference type="GO" id="GO:0019294">
    <property type="term" value="P:keto-3-deoxy-D-manno-octulosonic acid biosynthetic process"/>
    <property type="evidence" value="ECO:0007669"/>
    <property type="project" value="UniProtKB-UniRule"/>
</dbReference>
<dbReference type="Gene3D" id="3.20.20.70">
    <property type="entry name" value="Aldolase class I"/>
    <property type="match status" value="1"/>
</dbReference>
<dbReference type="HAMAP" id="MF_00056">
    <property type="entry name" value="KDO8P_synth"/>
    <property type="match status" value="1"/>
</dbReference>
<dbReference type="InterPro" id="IPR013785">
    <property type="entry name" value="Aldolase_TIM"/>
</dbReference>
<dbReference type="InterPro" id="IPR006218">
    <property type="entry name" value="DAHP1/KDSA"/>
</dbReference>
<dbReference type="InterPro" id="IPR006269">
    <property type="entry name" value="KDO8P_synthase"/>
</dbReference>
<dbReference type="NCBIfam" id="TIGR01362">
    <property type="entry name" value="KDO8P_synth"/>
    <property type="match status" value="1"/>
</dbReference>
<dbReference type="NCBIfam" id="NF003543">
    <property type="entry name" value="PRK05198.1"/>
    <property type="match status" value="1"/>
</dbReference>
<dbReference type="PANTHER" id="PTHR21057">
    <property type="entry name" value="PHOSPHO-2-DEHYDRO-3-DEOXYHEPTONATE ALDOLASE"/>
    <property type="match status" value="1"/>
</dbReference>
<dbReference type="Pfam" id="PF00793">
    <property type="entry name" value="DAHP_synth_1"/>
    <property type="match status" value="1"/>
</dbReference>
<dbReference type="SUPFAM" id="SSF51569">
    <property type="entry name" value="Aldolase"/>
    <property type="match status" value="1"/>
</dbReference>
<reference key="1">
    <citation type="submission" date="2006-03" db="EMBL/GenBank/DDBJ databases">
        <title>Complete sequence of Methylobacillus flagellatus KT.</title>
        <authorList>
            <consortium name="US DOE Joint Genome Institute"/>
            <person name="Copeland A."/>
            <person name="Lucas S."/>
            <person name="Lapidus A."/>
            <person name="Barry K."/>
            <person name="Detter J.C."/>
            <person name="Glavina del Rio T."/>
            <person name="Hammon N."/>
            <person name="Israni S."/>
            <person name="Dalin E."/>
            <person name="Tice H."/>
            <person name="Pitluck S."/>
            <person name="Brettin T."/>
            <person name="Bruce D."/>
            <person name="Han C."/>
            <person name="Tapia R."/>
            <person name="Saunders E."/>
            <person name="Gilna P."/>
            <person name="Schmutz J."/>
            <person name="Larimer F."/>
            <person name="Land M."/>
            <person name="Kyrpides N."/>
            <person name="Anderson I."/>
            <person name="Richardson P."/>
        </authorList>
    </citation>
    <scope>NUCLEOTIDE SEQUENCE [LARGE SCALE GENOMIC DNA]</scope>
    <source>
        <strain>ATCC 51484 / DSM 6875 / VKM B-1610 / KT</strain>
    </source>
</reference>
<keyword id="KW-0963">Cytoplasm</keyword>
<keyword id="KW-0448">Lipopolysaccharide biosynthesis</keyword>
<keyword id="KW-1185">Reference proteome</keyword>
<keyword id="KW-0808">Transferase</keyword>
<name>KDSA_METFK</name>
<evidence type="ECO:0000255" key="1">
    <source>
        <dbReference type="HAMAP-Rule" id="MF_00056"/>
    </source>
</evidence>
<gene>
    <name evidence="1" type="primary">kdsA</name>
    <name type="ordered locus">Mfla_1910</name>
</gene>
<sequence>MQLCGFEVGIDQPLFLIAGPCVIESQEMAIETAGQLKEITTALGINFIYKSSYDKANRSSNKTFRGFGMDEGLKILDEVRRQVGVPILTDVHTEAQVPHVAAVVDVLQTPAFLCRQTDFITACAQSGKPVNIKKGQFLAPGDMKQVVQKAKEANGGADTIMVCERGASFGYNTLISDMRGLAIMRETNCPVVFDATHSVQQPGGQGDKSGGQREFVPVLARAAVASGVAGVFMETHPDPAQALSDGPNAWPLSKMKALLEVLVDLDRVVKKAGFIEHTV</sequence>
<proteinExistence type="inferred from homology"/>